<comment type="function">
    <text evidence="1">Catalyzes the reversible oxidative deamination of glutamate to alpha-ketoglutarate and ammonia.</text>
</comment>
<comment type="catalytic activity">
    <reaction>
        <text>L-glutamate + NADP(+) + H2O = 2-oxoglutarate + NH4(+) + NADPH + H(+)</text>
        <dbReference type="Rhea" id="RHEA:11612"/>
        <dbReference type="ChEBI" id="CHEBI:15377"/>
        <dbReference type="ChEBI" id="CHEBI:15378"/>
        <dbReference type="ChEBI" id="CHEBI:16810"/>
        <dbReference type="ChEBI" id="CHEBI:28938"/>
        <dbReference type="ChEBI" id="CHEBI:29985"/>
        <dbReference type="ChEBI" id="CHEBI:57783"/>
        <dbReference type="ChEBI" id="CHEBI:58349"/>
        <dbReference type="EC" id="1.4.1.4"/>
    </reaction>
</comment>
<comment type="subunit">
    <text evidence="1">Homohexamer.</text>
</comment>
<comment type="similarity">
    <text evidence="3">Belongs to the Glu/Leu/Phe/Val dehydrogenases family.</text>
</comment>
<name>DHE4_HAEIN</name>
<accession>P43793</accession>
<proteinExistence type="inferred from homology"/>
<gene>
    <name type="primary">gdhA</name>
    <name type="ordered locus">HI_0189</name>
</gene>
<evidence type="ECO:0000250" key="1"/>
<evidence type="ECO:0000255" key="2">
    <source>
        <dbReference type="PROSITE-ProRule" id="PRU10011"/>
    </source>
</evidence>
<evidence type="ECO:0000305" key="3"/>
<reference key="1">
    <citation type="journal article" date="1995" name="Science">
        <title>Whole-genome random sequencing and assembly of Haemophilus influenzae Rd.</title>
        <authorList>
            <person name="Fleischmann R.D."/>
            <person name="Adams M.D."/>
            <person name="White O."/>
            <person name="Clayton R.A."/>
            <person name="Kirkness E.F."/>
            <person name="Kerlavage A.R."/>
            <person name="Bult C.J."/>
            <person name="Tomb J.-F."/>
            <person name="Dougherty B.A."/>
            <person name="Merrick J.M."/>
            <person name="McKenney K."/>
            <person name="Sutton G.G."/>
            <person name="FitzHugh W."/>
            <person name="Fields C.A."/>
            <person name="Gocayne J.D."/>
            <person name="Scott J.D."/>
            <person name="Shirley R."/>
            <person name="Liu L.-I."/>
            <person name="Glodek A."/>
            <person name="Kelley J.M."/>
            <person name="Weidman J.F."/>
            <person name="Phillips C.A."/>
            <person name="Spriggs T."/>
            <person name="Hedblom E."/>
            <person name="Cotton M.D."/>
            <person name="Utterback T.R."/>
            <person name="Hanna M.C."/>
            <person name="Nguyen D.T."/>
            <person name="Saudek D.M."/>
            <person name="Brandon R.C."/>
            <person name="Fine L.D."/>
            <person name="Fritchman J.L."/>
            <person name="Fuhrmann J.L."/>
            <person name="Geoghagen N.S.M."/>
            <person name="Gnehm C.L."/>
            <person name="McDonald L.A."/>
            <person name="Small K.V."/>
            <person name="Fraser C.M."/>
            <person name="Smith H.O."/>
            <person name="Venter J.C."/>
        </authorList>
    </citation>
    <scope>NUCLEOTIDE SEQUENCE [LARGE SCALE GENOMIC DNA]</scope>
    <source>
        <strain>ATCC 51907 / DSM 11121 / KW20 / Rd</strain>
    </source>
</reference>
<dbReference type="EC" id="1.4.1.4"/>
<dbReference type="EMBL" id="L42023">
    <property type="protein sequence ID" value="AAC21858.1"/>
    <property type="molecule type" value="Genomic_DNA"/>
</dbReference>
<dbReference type="PIR" id="A64053">
    <property type="entry name" value="A64053"/>
</dbReference>
<dbReference type="RefSeq" id="NP_438358.1">
    <property type="nucleotide sequence ID" value="NC_000907.1"/>
</dbReference>
<dbReference type="SMR" id="P43793"/>
<dbReference type="STRING" id="71421.HI_0189"/>
<dbReference type="EnsemblBacteria" id="AAC21858">
    <property type="protein sequence ID" value="AAC21858"/>
    <property type="gene ID" value="HI_0189"/>
</dbReference>
<dbReference type="KEGG" id="hin:HI_0189"/>
<dbReference type="PATRIC" id="fig|71421.8.peg.194"/>
<dbReference type="eggNOG" id="COG0334">
    <property type="taxonomic scope" value="Bacteria"/>
</dbReference>
<dbReference type="HOGENOM" id="CLU_025763_2_1_6"/>
<dbReference type="OrthoDB" id="9803297at2"/>
<dbReference type="PhylomeDB" id="P43793"/>
<dbReference type="BioCyc" id="HINF71421:G1GJ1-200-MONOMER"/>
<dbReference type="Proteomes" id="UP000000579">
    <property type="component" value="Chromosome"/>
</dbReference>
<dbReference type="GO" id="GO:0005737">
    <property type="term" value="C:cytoplasm"/>
    <property type="evidence" value="ECO:0000250"/>
    <property type="project" value="UniProtKB"/>
</dbReference>
<dbReference type="GO" id="GO:0005829">
    <property type="term" value="C:cytosol"/>
    <property type="evidence" value="ECO:0000318"/>
    <property type="project" value="GO_Central"/>
</dbReference>
<dbReference type="GO" id="GO:0004354">
    <property type="term" value="F:glutamate dehydrogenase (NADP+) activity"/>
    <property type="evidence" value="ECO:0000250"/>
    <property type="project" value="UniProtKB"/>
</dbReference>
<dbReference type="GO" id="GO:0006537">
    <property type="term" value="P:glutamate biosynthetic process"/>
    <property type="evidence" value="ECO:0000250"/>
    <property type="project" value="UniProtKB"/>
</dbReference>
<dbReference type="CDD" id="cd05313">
    <property type="entry name" value="NAD_bind_2_Glu_DH"/>
    <property type="match status" value="1"/>
</dbReference>
<dbReference type="FunFam" id="1.10.285.10:FF:000001">
    <property type="entry name" value="Glutamate dehydrogenase"/>
    <property type="match status" value="1"/>
</dbReference>
<dbReference type="FunFam" id="3.40.50.10860:FF:000002">
    <property type="entry name" value="Glutamate dehydrogenase"/>
    <property type="match status" value="1"/>
</dbReference>
<dbReference type="FunFam" id="3.40.50.720:FF:000030">
    <property type="entry name" value="Glutamate dehydrogenase"/>
    <property type="match status" value="1"/>
</dbReference>
<dbReference type="Gene3D" id="1.10.285.10">
    <property type="entry name" value="Glutamate Dehydrogenase, chain A, domain 3"/>
    <property type="match status" value="2"/>
</dbReference>
<dbReference type="Gene3D" id="3.40.50.10860">
    <property type="entry name" value="Leucine Dehydrogenase, chain A, domain 1"/>
    <property type="match status" value="1"/>
</dbReference>
<dbReference type="Gene3D" id="3.40.50.720">
    <property type="entry name" value="NAD(P)-binding Rossmann-like Domain"/>
    <property type="match status" value="1"/>
</dbReference>
<dbReference type="InterPro" id="IPR046346">
    <property type="entry name" value="Aminoacid_DH-like_N_sf"/>
</dbReference>
<dbReference type="InterPro" id="IPR006095">
    <property type="entry name" value="Glu/Leu/Phe/Val/Trp_DH"/>
</dbReference>
<dbReference type="InterPro" id="IPR006096">
    <property type="entry name" value="Glu/Leu/Phe/Val/Trp_DH_C"/>
</dbReference>
<dbReference type="InterPro" id="IPR006097">
    <property type="entry name" value="Glu/Leu/Phe/Val/Trp_DH_dimer"/>
</dbReference>
<dbReference type="InterPro" id="IPR033524">
    <property type="entry name" value="Glu/Leu/Phe/Val_DH_AS"/>
</dbReference>
<dbReference type="InterPro" id="IPR014362">
    <property type="entry name" value="Glu_DH"/>
</dbReference>
<dbReference type="InterPro" id="IPR050724">
    <property type="entry name" value="Glu_Leu_Phe_Val_DH"/>
</dbReference>
<dbReference type="InterPro" id="IPR036291">
    <property type="entry name" value="NAD(P)-bd_dom_sf"/>
</dbReference>
<dbReference type="InterPro" id="IPR033922">
    <property type="entry name" value="NAD_bind_Glu_DH"/>
</dbReference>
<dbReference type="NCBIfam" id="NF006929">
    <property type="entry name" value="PRK09414.1"/>
    <property type="match status" value="1"/>
</dbReference>
<dbReference type="PANTHER" id="PTHR43571">
    <property type="entry name" value="NADP-SPECIFIC GLUTAMATE DEHYDROGENASE 1-RELATED"/>
    <property type="match status" value="1"/>
</dbReference>
<dbReference type="PANTHER" id="PTHR43571:SF1">
    <property type="entry name" value="NADP-SPECIFIC GLUTAMATE DEHYDROGENASE 1-RELATED"/>
    <property type="match status" value="1"/>
</dbReference>
<dbReference type="Pfam" id="PF00208">
    <property type="entry name" value="ELFV_dehydrog"/>
    <property type="match status" value="1"/>
</dbReference>
<dbReference type="Pfam" id="PF02812">
    <property type="entry name" value="ELFV_dehydrog_N"/>
    <property type="match status" value="1"/>
</dbReference>
<dbReference type="PIRSF" id="PIRSF000185">
    <property type="entry name" value="Glu_DH"/>
    <property type="match status" value="1"/>
</dbReference>
<dbReference type="PRINTS" id="PR00082">
    <property type="entry name" value="GLFDHDRGNASE"/>
</dbReference>
<dbReference type="SMART" id="SM00839">
    <property type="entry name" value="ELFV_dehydrog"/>
    <property type="match status" value="1"/>
</dbReference>
<dbReference type="SUPFAM" id="SSF53223">
    <property type="entry name" value="Aminoacid dehydrogenase-like, N-terminal domain"/>
    <property type="match status" value="1"/>
</dbReference>
<dbReference type="SUPFAM" id="SSF51735">
    <property type="entry name" value="NAD(P)-binding Rossmann-fold domains"/>
    <property type="match status" value="1"/>
</dbReference>
<dbReference type="PROSITE" id="PS00074">
    <property type="entry name" value="GLFV_DEHYDROGENASE"/>
    <property type="match status" value="1"/>
</dbReference>
<organism>
    <name type="scientific">Haemophilus influenzae (strain ATCC 51907 / DSM 11121 / KW20 / Rd)</name>
    <dbReference type="NCBI Taxonomy" id="71421"/>
    <lineage>
        <taxon>Bacteria</taxon>
        <taxon>Pseudomonadati</taxon>
        <taxon>Pseudomonadota</taxon>
        <taxon>Gammaproteobacteria</taxon>
        <taxon>Pasteurellales</taxon>
        <taxon>Pasteurellaceae</taxon>
        <taxon>Haemophilus</taxon>
    </lineage>
</organism>
<sequence>MSKVASLDAFLTKVAQRDGYQPEFLQAVREVFTSIWPFLEANPKYRSEALLERLVEPERAFQFRVAWTDDKGQVQVNRAFRVQFNSAIGPFKGGMRFHPSVNLSILKFLGFEQIFKNALTTLPMGGAKGGSDFDPKGKSDAEVMRFCQALMAELYRHVGADTDVPAGDIGVGGREVGYLAGYMKKLSNQSACVFTGRGLSFGGSLIRPEATGYGLIYFAQAMLAEKGDSFAGKVVSVSGSGNVAQYAIEKALSLGAKVVTCSDSSGYVYDPNGFTTEKLAALFDIKNTKRGRVKDYAEQFGLQYFEGKRPWEVQVDIALPCATQNELELSDAQRLIKNGVKLVAEGANMPTTIEATEALLAADVLFGPGKAANAGGVATSGLEMAQSSQRLYWTAEEVDAQLHRIMLDIHANCKKYGTIEGQENINYVVGANVAGFVKVADAMLAQGVY</sequence>
<protein>
    <recommendedName>
        <fullName>NADP-specific glutamate dehydrogenase</fullName>
        <shortName>NADP-GDH</shortName>
        <ecNumber>1.4.1.4</ecNumber>
    </recommendedName>
</protein>
<keyword id="KW-0521">NADP</keyword>
<keyword id="KW-0560">Oxidoreductase</keyword>
<keyword id="KW-1185">Reference proteome</keyword>
<feature type="chain" id="PRO_0000182770" description="NADP-specific glutamate dehydrogenase">
    <location>
        <begin position="1"/>
        <end position="449"/>
    </location>
</feature>
<feature type="active site" description="Proton donor" evidence="2">
    <location>
        <position position="128"/>
    </location>
</feature>
<feature type="binding site" evidence="1">
    <location>
        <position position="92"/>
    </location>
    <ligand>
        <name>substrate</name>
    </ligand>
</feature>
<feature type="binding site" evidence="1">
    <location>
        <position position="113"/>
    </location>
    <ligand>
        <name>substrate</name>
    </ligand>
</feature>
<feature type="binding site" evidence="1">
    <location>
        <position position="116"/>
    </location>
    <ligand>
        <name>substrate</name>
    </ligand>
</feature>
<feature type="binding site" evidence="1">
    <location>
        <position position="167"/>
    </location>
    <ligand>
        <name>substrate</name>
    </ligand>
</feature>
<feature type="binding site" evidence="1">
    <location>
        <position position="211"/>
    </location>
    <ligand>
        <name>NADP(+)</name>
        <dbReference type="ChEBI" id="CHEBI:58349"/>
    </ligand>
</feature>
<feature type="binding site" evidence="1">
    <location>
        <position position="242"/>
    </location>
    <ligand>
        <name>NADP(+)</name>
        <dbReference type="ChEBI" id="CHEBI:58349"/>
    </ligand>
</feature>
<feature type="binding site" evidence="1">
    <location>
        <position position="380"/>
    </location>
    <ligand>
        <name>substrate</name>
    </ligand>
</feature>
<feature type="site" description="Important for catalysis" evidence="1">
    <location>
        <position position="168"/>
    </location>
</feature>